<protein>
    <recommendedName>
        <fullName>NAD(P)H dehydrogenase [quinone] 1</fullName>
        <ecNumber evidence="3">1.6.5.2</ecNumber>
    </recommendedName>
    <alternativeName>
        <fullName>Azoreductase</fullName>
    </alternativeName>
    <alternativeName>
        <fullName evidence="3">DT-diaphorase</fullName>
        <shortName>DTD</shortName>
    </alternativeName>
    <alternativeName>
        <fullName>Menadione reductase</fullName>
    </alternativeName>
    <alternativeName>
        <fullName evidence="3">NAD(P)H:quinone oxidoreductase 1</fullName>
    </alternativeName>
    <alternativeName>
        <fullName>Phylloquinone reductase</fullName>
    </alternativeName>
    <alternativeName>
        <fullName>Quinone reductase 1</fullName>
        <shortName>QR1</shortName>
    </alternativeName>
</protein>
<comment type="function">
    <text evidence="2 3">Flavin-containing quinone reductase that catalyzes two-electron reduction of quinones to hydroquinones using either NADH or NADPH as electron donors. In a ping-pong kinetic mechanism, the electrons are sequentially transferred from NAD(P)H to flavin cofactor and then from reduced flavin to the quinone, bypassing the formation of semiquinone and reactive oxygen species (By similarity). Regulates cellular redox state primarily through quinone detoxification. Reduces components of plasma membrane redox system such as coenzyme Q and vitamin quinones, producing antioxidant hydroquinone forms. In the process may function as superoxide scavenger to prevent hydroquinone oxidation and facilitate excretion (By similarity). Alternatively, can activate quinones and their derivatives by generating redox reactive hydroquinones with DNA cross-linking antitumor potential (By similarity). Acts as a gatekeeper of the core 20S proteasome known to degrade proteins with unstructured regions. Upon oxidative stress, interacts with tumor suppressors TP53 and TP73 in a NADH-dependent way and inhibits their ubiquitin-independent degradation by the 20S proteasome (By similarity).</text>
</comment>
<comment type="catalytic activity">
    <reaction evidence="3">
        <text>a quinone + NADH + H(+) = a quinol + NAD(+)</text>
        <dbReference type="Rhea" id="RHEA:46160"/>
        <dbReference type="ChEBI" id="CHEBI:15378"/>
        <dbReference type="ChEBI" id="CHEBI:24646"/>
        <dbReference type="ChEBI" id="CHEBI:57540"/>
        <dbReference type="ChEBI" id="CHEBI:57945"/>
        <dbReference type="ChEBI" id="CHEBI:132124"/>
        <dbReference type="EC" id="1.6.5.2"/>
    </reaction>
    <physiologicalReaction direction="left-to-right" evidence="3">
        <dbReference type="Rhea" id="RHEA:46161"/>
    </physiologicalReaction>
</comment>
<comment type="catalytic activity">
    <reaction evidence="3">
        <text>a quinone + NADPH + H(+) = a quinol + NADP(+)</text>
        <dbReference type="Rhea" id="RHEA:46164"/>
        <dbReference type="ChEBI" id="CHEBI:15378"/>
        <dbReference type="ChEBI" id="CHEBI:24646"/>
        <dbReference type="ChEBI" id="CHEBI:57783"/>
        <dbReference type="ChEBI" id="CHEBI:58349"/>
        <dbReference type="ChEBI" id="CHEBI:132124"/>
        <dbReference type="EC" id="1.6.5.2"/>
    </reaction>
    <physiologicalReaction direction="left-to-right" evidence="3">
        <dbReference type="Rhea" id="RHEA:46165"/>
    </physiologicalReaction>
</comment>
<comment type="catalytic activity">
    <reaction evidence="3">
        <text>ubiquinone-10 + NADH + H(+) = ubiquinol-10 + NAD(+)</text>
        <dbReference type="Rhea" id="RHEA:61984"/>
        <dbReference type="ChEBI" id="CHEBI:15378"/>
        <dbReference type="ChEBI" id="CHEBI:46245"/>
        <dbReference type="ChEBI" id="CHEBI:57540"/>
        <dbReference type="ChEBI" id="CHEBI:57945"/>
        <dbReference type="ChEBI" id="CHEBI:64183"/>
    </reaction>
    <physiologicalReaction direction="left-to-right" evidence="3">
        <dbReference type="Rhea" id="RHEA:61985"/>
    </physiologicalReaction>
</comment>
<comment type="catalytic activity">
    <reaction evidence="3">
        <text>menadione + NADH + H(+) = menadiol + NAD(+)</text>
        <dbReference type="Rhea" id="RHEA:69695"/>
        <dbReference type="ChEBI" id="CHEBI:6746"/>
        <dbReference type="ChEBI" id="CHEBI:15378"/>
        <dbReference type="ChEBI" id="CHEBI:28869"/>
        <dbReference type="ChEBI" id="CHEBI:57540"/>
        <dbReference type="ChEBI" id="CHEBI:57945"/>
    </reaction>
    <physiologicalReaction direction="left-to-right" evidence="3">
        <dbReference type="Rhea" id="RHEA:69696"/>
    </physiologicalReaction>
</comment>
<comment type="cofactor">
    <cofactor evidence="3">
        <name>FAD</name>
        <dbReference type="ChEBI" id="CHEBI:57692"/>
    </cofactor>
</comment>
<comment type="subunit">
    <text evidence="3">Homodimer. Interacts with PDLIM4 isoform 2; this interaction stabilizes PDLIM4 isoform 2 in response to oxidative stress and protects it from ubiquitin-independent degradation by the core 20S proteasome. Interacts with TP73 (via SAM domain); this interaction is NADH-dependent, stabilizes TP73 in response to oxidative stress and protects it from ubiquitin-independent degradation by the 20S proteasome. Interacts with TP53; this interaction is NADH-dependent, stabilizes TP53 in response to oxidative stress and protects it from ubiquitin-independent degradation by the 20S proteasome.</text>
</comment>
<comment type="subcellular location">
    <subcellularLocation>
        <location evidence="2">Cytoplasm</location>
        <location evidence="2">Cytosol</location>
    </subcellularLocation>
</comment>
<comment type="similarity">
    <text evidence="5">Belongs to the NAD(P)H dehydrogenase (quinone) family.</text>
</comment>
<accession>Q8CHK7</accession>
<name>NQO1_CAVPO</name>
<keyword id="KW-0963">Cytoplasm</keyword>
<keyword id="KW-0274">FAD</keyword>
<keyword id="KW-0285">Flavoprotein</keyword>
<keyword id="KW-1017">Isopeptide bond</keyword>
<keyword id="KW-0520">NAD</keyword>
<keyword id="KW-0521">NADP</keyword>
<keyword id="KW-0560">Oxidoreductase</keyword>
<keyword id="KW-0597">Phosphoprotein</keyword>
<keyword id="KW-1185">Reference proteome</keyword>
<keyword id="KW-0832">Ubl conjugation</keyword>
<feature type="chain" id="PRO_0000071621" description="NAD(P)H dehydrogenase [quinone] 1">
    <location>
        <begin position="1"/>
        <end position="275"/>
    </location>
</feature>
<feature type="region of interest" description="Important for apoenzyme conformational stability" evidence="3">
    <location>
        <begin position="226"/>
        <end position="275"/>
    </location>
</feature>
<feature type="binding site" evidence="4">
    <location>
        <position position="13"/>
    </location>
    <ligand>
        <name>FAD</name>
        <dbReference type="ChEBI" id="CHEBI:57692"/>
    </ligand>
</feature>
<feature type="binding site" evidence="4">
    <location>
        <begin position="19"/>
        <end position="20"/>
    </location>
    <ligand>
        <name>FAD</name>
        <dbReference type="ChEBI" id="CHEBI:57692"/>
    </ligand>
</feature>
<feature type="binding site" evidence="4">
    <location>
        <position position="68"/>
    </location>
    <ligand>
        <name>FAD</name>
        <dbReference type="ChEBI" id="CHEBI:57692"/>
    </ligand>
</feature>
<feature type="binding site" evidence="4">
    <location>
        <begin position="105"/>
        <end position="108"/>
    </location>
    <ligand>
        <name>FAD</name>
        <dbReference type="ChEBI" id="CHEBI:57692"/>
    </ligand>
</feature>
<feature type="binding site" evidence="1">
    <location>
        <begin position="127"/>
        <end position="129"/>
    </location>
    <ligand>
        <name>substrate</name>
    </ligand>
</feature>
<feature type="binding site" evidence="4">
    <location>
        <begin position="149"/>
        <end position="152"/>
    </location>
    <ligand>
        <name>FAD</name>
        <dbReference type="ChEBI" id="CHEBI:57692"/>
    </ligand>
</feature>
<feature type="binding site" evidence="4">
    <location>
        <position position="157"/>
    </location>
    <ligand>
        <name>FAD</name>
        <dbReference type="ChEBI" id="CHEBI:57692"/>
    </ligand>
</feature>
<feature type="binding site" evidence="4">
    <location>
        <position position="202"/>
    </location>
    <ligand>
        <name>FAD</name>
        <dbReference type="ChEBI" id="CHEBI:57692"/>
    </ligand>
</feature>
<feature type="modified residue" description="Phosphoserine" evidence="3">
    <location>
        <position position="83"/>
    </location>
</feature>
<feature type="cross-link" description="Glycyl lysine isopeptide (Lys-Gly) (interchain with G-Cter in SUMO2)" evidence="3">
    <location>
        <position position="252"/>
    </location>
</feature>
<gene>
    <name type="primary">NQO1</name>
</gene>
<reference key="1">
    <citation type="submission" date="2001-02" db="EMBL/GenBank/DDBJ databases">
        <title>Inhibition of the transcription of the guinea pig NAD(P)H: quinone oxidoreductase1 (NQO1) gene by specificity protein 1 (Sp1).</title>
        <authorList>
            <person name="Itoh K."/>
            <person name="Takahashi Y."/>
            <person name="Kitagawa M."/>
            <person name="Kamataki T."/>
        </authorList>
    </citation>
    <scope>NUCLEOTIDE SEQUENCE [MRNA]</scope>
    <source>
        <strain>Hartley</strain>
    </source>
</reference>
<evidence type="ECO:0000250" key="1"/>
<evidence type="ECO:0000250" key="2">
    <source>
        <dbReference type="UniProtKB" id="P05982"/>
    </source>
</evidence>
<evidence type="ECO:0000250" key="3">
    <source>
        <dbReference type="UniProtKB" id="P15559"/>
    </source>
</evidence>
<evidence type="ECO:0000250" key="4">
    <source>
        <dbReference type="UniProtKB" id="Q64669"/>
    </source>
</evidence>
<evidence type="ECO:0000305" key="5"/>
<proteinExistence type="evidence at transcript level"/>
<organism>
    <name type="scientific">Cavia porcellus</name>
    <name type="common">Guinea pig</name>
    <dbReference type="NCBI Taxonomy" id="10141"/>
    <lineage>
        <taxon>Eukaryota</taxon>
        <taxon>Metazoa</taxon>
        <taxon>Chordata</taxon>
        <taxon>Craniata</taxon>
        <taxon>Vertebrata</taxon>
        <taxon>Euteleostomi</taxon>
        <taxon>Mammalia</taxon>
        <taxon>Eutheria</taxon>
        <taxon>Euarchontoglires</taxon>
        <taxon>Glires</taxon>
        <taxon>Rodentia</taxon>
        <taxon>Hystricomorpha</taxon>
        <taxon>Caviidae</taxon>
        <taxon>Cavia</taxon>
    </lineage>
</organism>
<dbReference type="EC" id="1.6.5.2" evidence="3"/>
<dbReference type="EMBL" id="AB055403">
    <property type="protein sequence ID" value="BAC53985.1"/>
    <property type="molecule type" value="mRNA"/>
</dbReference>
<dbReference type="RefSeq" id="NP_001166457.1">
    <property type="nucleotide sequence ID" value="NM_001172986.1"/>
</dbReference>
<dbReference type="SMR" id="Q8CHK7"/>
<dbReference type="FunCoup" id="Q8CHK7">
    <property type="interactions" value="226"/>
</dbReference>
<dbReference type="STRING" id="10141.ENSCPOP00000011185"/>
<dbReference type="GeneID" id="100135582"/>
<dbReference type="KEGG" id="cpoc:100135582"/>
<dbReference type="CTD" id="1728"/>
<dbReference type="eggNOG" id="ENOG502QQMI">
    <property type="taxonomic scope" value="Eukaryota"/>
</dbReference>
<dbReference type="HOGENOM" id="CLU_058643_2_0_1"/>
<dbReference type="InParanoid" id="Q8CHK7"/>
<dbReference type="OrthoDB" id="26889at2759"/>
<dbReference type="TreeFam" id="TF300296"/>
<dbReference type="BRENDA" id="1.6.5.2">
    <property type="organism ID" value="1225"/>
</dbReference>
<dbReference type="Proteomes" id="UP000005447">
    <property type="component" value="Unassembled WGS sequence"/>
</dbReference>
<dbReference type="GO" id="GO:0005829">
    <property type="term" value="C:cytosol"/>
    <property type="evidence" value="ECO:0007669"/>
    <property type="project" value="UniProtKB-SubCell"/>
</dbReference>
<dbReference type="GO" id="GO:0050136">
    <property type="term" value="F:NADH:ubiquinone reductase (non-electrogenic) activity"/>
    <property type="evidence" value="ECO:0000250"/>
    <property type="project" value="UniProtKB"/>
</dbReference>
<dbReference type="GO" id="GO:0008753">
    <property type="term" value="F:NADPH dehydrogenase (quinone) activity"/>
    <property type="evidence" value="ECO:0007669"/>
    <property type="project" value="RHEA"/>
</dbReference>
<dbReference type="GO" id="GO:0034599">
    <property type="term" value="P:cellular response to oxidative stress"/>
    <property type="evidence" value="ECO:0000250"/>
    <property type="project" value="UniProtKB"/>
</dbReference>
<dbReference type="GO" id="GO:0110076">
    <property type="term" value="P:negative regulation of ferroptosis"/>
    <property type="evidence" value="ECO:0000250"/>
    <property type="project" value="UniProtKB"/>
</dbReference>
<dbReference type="GO" id="GO:0042177">
    <property type="term" value="P:negative regulation of protein catabolic process"/>
    <property type="evidence" value="ECO:0000250"/>
    <property type="project" value="UniProtKB"/>
</dbReference>
<dbReference type="GO" id="GO:0019430">
    <property type="term" value="P:removal of superoxide radicals"/>
    <property type="evidence" value="ECO:0000250"/>
    <property type="project" value="UniProtKB"/>
</dbReference>
<dbReference type="GO" id="GO:0006743">
    <property type="term" value="P:ubiquinone metabolic process"/>
    <property type="evidence" value="ECO:0000250"/>
    <property type="project" value="UniProtKB"/>
</dbReference>
<dbReference type="GO" id="GO:0042360">
    <property type="term" value="P:vitamin E metabolic process"/>
    <property type="evidence" value="ECO:0000250"/>
    <property type="project" value="UniProtKB"/>
</dbReference>
<dbReference type="GO" id="GO:0042373">
    <property type="term" value="P:vitamin K metabolic process"/>
    <property type="evidence" value="ECO:0000250"/>
    <property type="project" value="UniProtKB"/>
</dbReference>
<dbReference type="FunFam" id="3.40.50.360:FF:000029">
    <property type="entry name" value="NAD(P)H dehydrogenase [quinone] 1"/>
    <property type="match status" value="1"/>
</dbReference>
<dbReference type="Gene3D" id="3.40.50.360">
    <property type="match status" value="1"/>
</dbReference>
<dbReference type="InterPro" id="IPR003680">
    <property type="entry name" value="Flavodoxin_fold"/>
</dbReference>
<dbReference type="InterPro" id="IPR029039">
    <property type="entry name" value="Flavoprotein-like_sf"/>
</dbReference>
<dbReference type="InterPro" id="IPR051545">
    <property type="entry name" value="NAD(P)H_dehydrogenase_qn"/>
</dbReference>
<dbReference type="PANTHER" id="PTHR10204">
    <property type="entry name" value="NAD P H OXIDOREDUCTASE-RELATED"/>
    <property type="match status" value="1"/>
</dbReference>
<dbReference type="PANTHER" id="PTHR10204:SF1">
    <property type="entry name" value="NAD(P)H DEHYDROGENASE [QUINONE] 1"/>
    <property type="match status" value="1"/>
</dbReference>
<dbReference type="Pfam" id="PF02525">
    <property type="entry name" value="Flavodoxin_2"/>
    <property type="match status" value="1"/>
</dbReference>
<dbReference type="SUPFAM" id="SSF52218">
    <property type="entry name" value="Flavoproteins"/>
    <property type="match status" value="1"/>
</dbReference>
<sequence length="275" mass="31086">MAALRRALIILAHSEKTSFNYAMKEAAVEALQRKGWEVAVSDLYAMKFDPIISRKDITGALKDPENFQYPAESALAYKESRLSPDIVTEQKKVEEADLLIFQFPLQWFGVPAILKGWFERVFTGGFAYTYAAMYDKGPFQNKKAVLSITTGGSESMYSLKGIHGDMNIILWPIQSGTLHFCGFQVLEPQLTYGIGHTPPDVRTEILAGWKKRLENIWDETPLYFAPSSLFDLNFQAGFLLKKEIEDEQKNNKYGLSVGHHLGKPIPTDNQIKARK</sequence>